<name>IL4_FELCA</name>
<organism>
    <name type="scientific">Felis catus</name>
    <name type="common">Cat</name>
    <name type="synonym">Felis silvestris catus</name>
    <dbReference type="NCBI Taxonomy" id="9685"/>
    <lineage>
        <taxon>Eukaryota</taxon>
        <taxon>Metazoa</taxon>
        <taxon>Chordata</taxon>
        <taxon>Craniata</taxon>
        <taxon>Vertebrata</taxon>
        <taxon>Euteleostomi</taxon>
        <taxon>Mammalia</taxon>
        <taxon>Eutheria</taxon>
        <taxon>Laurasiatheria</taxon>
        <taxon>Carnivora</taxon>
        <taxon>Feliformia</taxon>
        <taxon>Felidae</taxon>
        <taxon>Felinae</taxon>
        <taxon>Felis</taxon>
    </lineage>
</organism>
<gene>
    <name type="primary">IL4</name>
</gene>
<protein>
    <recommendedName>
        <fullName>Interleukin-4</fullName>
        <shortName>IL-4</shortName>
    </recommendedName>
    <alternativeName>
        <fullName>B-cell stimulatory factor 1</fullName>
        <shortName>BSF-1</shortName>
    </alternativeName>
    <alternativeName>
        <fullName>Lymphocyte stimulatory factor 1</fullName>
    </alternativeName>
</protein>
<dbReference type="EMBL" id="X87408">
    <property type="protein sequence ID" value="CAA60856.1"/>
    <property type="molecule type" value="Genomic_DNA"/>
</dbReference>
<dbReference type="EMBL" id="U39634">
    <property type="protein sequence ID" value="AAB42052.1"/>
    <property type="molecule type" value="mRNA"/>
</dbReference>
<dbReference type="EMBL" id="AF054602">
    <property type="protein sequence ID" value="AAC15975.1"/>
    <property type="molecule type" value="mRNA"/>
</dbReference>
<dbReference type="RefSeq" id="NP_001036804.1">
    <property type="nucleotide sequence ID" value="NM_001043339.1"/>
</dbReference>
<dbReference type="SMR" id="P55030"/>
<dbReference type="FunCoup" id="P55030">
    <property type="interactions" value="63"/>
</dbReference>
<dbReference type="STRING" id="9685.ENSFCAP00000002290"/>
<dbReference type="GlyCosmos" id="P55030">
    <property type="glycosylation" value="6 sites, No reported glycans"/>
</dbReference>
<dbReference type="PaxDb" id="9685-ENSFCAP00000002290"/>
<dbReference type="GeneID" id="751514"/>
<dbReference type="KEGG" id="fca:751514"/>
<dbReference type="CTD" id="3565"/>
<dbReference type="eggNOG" id="KOG3886">
    <property type="taxonomic scope" value="Eukaryota"/>
</dbReference>
<dbReference type="HOGENOM" id="CLU_154691_0_0_1"/>
<dbReference type="InParanoid" id="P55030"/>
<dbReference type="OrthoDB" id="3176171at2759"/>
<dbReference type="TreeFam" id="TF336383"/>
<dbReference type="Proteomes" id="UP000011712">
    <property type="component" value="Unplaced"/>
</dbReference>
<dbReference type="GO" id="GO:0005615">
    <property type="term" value="C:extracellular space"/>
    <property type="evidence" value="ECO:0007669"/>
    <property type="project" value="UniProtKB-KW"/>
</dbReference>
<dbReference type="GO" id="GO:0005125">
    <property type="term" value="F:cytokine activity"/>
    <property type="evidence" value="ECO:0007669"/>
    <property type="project" value="UniProtKB-KW"/>
</dbReference>
<dbReference type="GO" id="GO:0008083">
    <property type="term" value="F:growth factor activity"/>
    <property type="evidence" value="ECO:0007669"/>
    <property type="project" value="UniProtKB-KW"/>
</dbReference>
<dbReference type="GO" id="GO:0005136">
    <property type="term" value="F:interleukin-4 receptor binding"/>
    <property type="evidence" value="ECO:0007669"/>
    <property type="project" value="InterPro"/>
</dbReference>
<dbReference type="GO" id="GO:0042113">
    <property type="term" value="P:B cell activation"/>
    <property type="evidence" value="ECO:0007669"/>
    <property type="project" value="UniProtKB-KW"/>
</dbReference>
<dbReference type="GO" id="GO:0006955">
    <property type="term" value="P:immune response"/>
    <property type="evidence" value="ECO:0007669"/>
    <property type="project" value="InterPro"/>
</dbReference>
<dbReference type="GO" id="GO:0035771">
    <property type="term" value="P:interleukin-4-mediated signaling pathway"/>
    <property type="evidence" value="ECO:0000318"/>
    <property type="project" value="GO_Central"/>
</dbReference>
<dbReference type="GO" id="GO:0050728">
    <property type="term" value="P:negative regulation of inflammatory response"/>
    <property type="evidence" value="ECO:0000318"/>
    <property type="project" value="GO_Central"/>
</dbReference>
<dbReference type="GO" id="GO:0045893">
    <property type="term" value="P:positive regulation of DNA-templated transcription"/>
    <property type="evidence" value="ECO:0000318"/>
    <property type="project" value="GO_Central"/>
</dbReference>
<dbReference type="GO" id="GO:0016239">
    <property type="term" value="P:positive regulation of macroautophagy"/>
    <property type="evidence" value="ECO:0000250"/>
    <property type="project" value="UniProtKB"/>
</dbReference>
<dbReference type="GO" id="GO:0050776">
    <property type="term" value="P:regulation of immune response"/>
    <property type="evidence" value="ECO:0000318"/>
    <property type="project" value="GO_Central"/>
</dbReference>
<dbReference type="FunFam" id="1.20.1250.10:FF:000014">
    <property type="entry name" value="Interleukin-4"/>
    <property type="match status" value="1"/>
</dbReference>
<dbReference type="Gene3D" id="1.20.1250.10">
    <property type="match status" value="1"/>
</dbReference>
<dbReference type="InterPro" id="IPR009079">
    <property type="entry name" value="4_helix_cytokine-like_core"/>
</dbReference>
<dbReference type="InterPro" id="IPR002354">
    <property type="entry name" value="IL-4"/>
</dbReference>
<dbReference type="InterPro" id="IPR001325">
    <property type="entry name" value="IL-4/IL-13"/>
</dbReference>
<dbReference type="InterPro" id="IPR018096">
    <property type="entry name" value="IL-4/IL-13_CS"/>
</dbReference>
<dbReference type="PANTHER" id="PTHR47401">
    <property type="entry name" value="INTERLEUKIN-4"/>
    <property type="match status" value="1"/>
</dbReference>
<dbReference type="PANTHER" id="PTHR47401:SF1">
    <property type="entry name" value="INTERLEUKIN-4"/>
    <property type="match status" value="1"/>
</dbReference>
<dbReference type="Pfam" id="PF00727">
    <property type="entry name" value="IL4"/>
    <property type="match status" value="1"/>
</dbReference>
<dbReference type="PIRSF" id="PIRSF001941">
    <property type="entry name" value="Interleukin_4"/>
    <property type="match status" value="1"/>
</dbReference>
<dbReference type="PRINTS" id="PR00431">
    <property type="entry name" value="INTERLEUKIN4"/>
</dbReference>
<dbReference type="SMART" id="SM00190">
    <property type="entry name" value="IL4_13"/>
    <property type="match status" value="1"/>
</dbReference>
<dbReference type="SUPFAM" id="SSF47266">
    <property type="entry name" value="4-helical cytokines"/>
    <property type="match status" value="1"/>
</dbReference>
<dbReference type="PROSITE" id="PS00838">
    <property type="entry name" value="INTERLEUKIN_4_13"/>
    <property type="match status" value="1"/>
</dbReference>
<reference key="1">
    <citation type="submission" date="1995-10" db="EMBL/GenBank/DDBJ databases">
        <title>Molecular cloning of feline interleukin-4.</title>
        <authorList>
            <person name="Schijns V.E.C.J."/>
            <person name="Wierda C.M.H."/>
            <person name="van Dam E.J.M."/>
            <person name="Vahlenkamp T.W."/>
            <person name="Horzinek M.C."/>
        </authorList>
    </citation>
    <scope>NUCLEOTIDE SEQUENCE [GENOMIC DNA]</scope>
    <source>
        <tissue>Peripheral blood</tissue>
    </source>
</reference>
<reference key="2">
    <citation type="submission" date="1995-10" db="EMBL/GenBank/DDBJ databases">
        <authorList>
            <person name="Lerner D.L."/>
            <person name="Elder J.H."/>
        </authorList>
    </citation>
    <scope>NUCLEOTIDE SEQUENCE [MRNA]</scope>
</reference>
<reference key="3">
    <citation type="journal article" date="1999" name="Clin. Diagn. Lab. Immunol.">
        <title>Cytokine mRNA expression in lesions in cats with chronic gingivostomatitis.</title>
        <authorList>
            <person name="Harley R."/>
            <person name="Helps C.R."/>
            <person name="Harbour D.A."/>
            <person name="Gruffydd-Jones T.J."/>
            <person name="Day M.J."/>
        </authorList>
    </citation>
    <scope>NUCLEOTIDE SEQUENCE [MRNA] OF 25-126</scope>
</reference>
<proteinExistence type="evidence at transcript level"/>
<accession>P55030</accession>
<accession>O62774</accession>
<accession>P79170</accession>
<sequence length="133" mass="15148">MGLTYQLIPALVCLLAFTSTFVHGQNFNNTLKEIIKTLNILTARNDSCMELTVMDVLAAPKNTSDKEIFCRATTVLRQIYTHHNCSTKFLKGLDRNLSSMANRTCSVNEVKKCTLKDFLERLKAIMQKKYSKH</sequence>
<evidence type="ECO:0000250" key="1"/>
<evidence type="ECO:0000250" key="2">
    <source>
        <dbReference type="UniProtKB" id="P07750"/>
    </source>
</evidence>
<evidence type="ECO:0000255" key="3"/>
<evidence type="ECO:0000305" key="4"/>
<comment type="function">
    <text evidence="2">Participates in at least several B-cell activation processes as well as of other cell types. It is a costimulator of DNA-synthesis. It induces the expression of class II MHC molecules on resting B-cells. It enhances both secretion and cell surface expression of IgE and IgG1. It also regulates the expression of the low affinity Fc receptor for IgE (CD23) on both lymphocytes and monocytes. Positively regulates IL31RA expression in macrophages. Stimulates autophagy in dendritic cells by interfering with mTORC1 signaling and through the induction of RUFY4.</text>
</comment>
<comment type="subcellular location">
    <subcellularLocation>
        <location>Secreted</location>
    </subcellularLocation>
</comment>
<comment type="similarity">
    <text evidence="4">Belongs to the IL-4/IL-13 family.</text>
</comment>
<feature type="signal peptide" evidence="3">
    <location>
        <begin position="1"/>
        <end position="24"/>
    </location>
</feature>
<feature type="chain" id="PRO_0000015530" description="Interleukin-4">
    <location>
        <begin position="25"/>
        <end position="133"/>
    </location>
</feature>
<feature type="glycosylation site" description="N-linked (GlcNAc...) asparagine" evidence="3">
    <location>
        <position position="28"/>
    </location>
</feature>
<feature type="glycosylation site" description="N-linked (GlcNAc...) asparagine" evidence="3">
    <location>
        <position position="45"/>
    </location>
</feature>
<feature type="glycosylation site" description="N-linked (GlcNAc...) asparagine" evidence="3">
    <location>
        <position position="62"/>
    </location>
</feature>
<feature type="glycosylation site" description="N-linked (GlcNAc...) asparagine" evidence="3">
    <location>
        <position position="84"/>
    </location>
</feature>
<feature type="glycosylation site" description="N-linked (GlcNAc...) asparagine" evidence="3">
    <location>
        <position position="96"/>
    </location>
</feature>
<feature type="glycosylation site" description="N-linked (GlcNAc...) asparagine" evidence="3">
    <location>
        <position position="102"/>
    </location>
</feature>
<feature type="disulfide bond" evidence="1">
    <location>
        <begin position="48"/>
        <end position="85"/>
    </location>
</feature>
<feature type="disulfide bond" evidence="1">
    <location>
        <begin position="70"/>
        <end position="113"/>
    </location>
</feature>
<feature type="sequence conflict" description="In Ref. 2; AAB42052." evidence="4" ref="2">
    <original>G</original>
    <variation>D</variation>
    <location>
        <position position="2"/>
    </location>
</feature>
<feature type="sequence conflict" description="In Ref. 2; AAB42052." evidence="4" ref="2">
    <original>Y</original>
    <variation>S</variation>
    <location>
        <position position="5"/>
    </location>
</feature>
<keyword id="KW-0075">B-cell activation</keyword>
<keyword id="KW-0202">Cytokine</keyword>
<keyword id="KW-1015">Disulfide bond</keyword>
<keyword id="KW-0325">Glycoprotein</keyword>
<keyword id="KW-0339">Growth factor</keyword>
<keyword id="KW-1185">Reference proteome</keyword>
<keyword id="KW-0964">Secreted</keyword>
<keyword id="KW-0732">Signal</keyword>